<sequence length="247" mass="27913">MPDKNIVEDVIGDLVDNFTETVQKNKHGSSFFEQEDSVSSRFNRLFDRQKPIHHVLGGGKSADVLLWRNKKISASVLMGATAIWVLFEWINFHFLSLVCYALLLGMIAQFVWSNASGFLNRSQSRVPRLVLPKDFFAEVGVAVGKEVNRGLLFLQDLACKGNLKQFLMAVIGLWVAAMVGSCCNFLTVLYIGFVGAHTMPVLYERYEDEVDGFMDSMIMKFHSHYKKLDTGFLSRIPSGKFGLKKRE</sequence>
<proteinExistence type="evidence at transcript level"/>
<name>RTNLH_ARATH</name>
<feature type="chain" id="PRO_0000371289" description="Reticulon-like protein B8">
    <location>
        <begin position="1"/>
        <end position="247"/>
    </location>
</feature>
<feature type="transmembrane region" description="Helical" evidence="2">
    <location>
        <begin position="71"/>
        <end position="91"/>
    </location>
</feature>
<feature type="transmembrane region" description="Helical" evidence="2">
    <location>
        <begin position="92"/>
        <end position="112"/>
    </location>
</feature>
<feature type="transmembrane region" description="Helical" evidence="2">
    <location>
        <begin position="166"/>
        <end position="186"/>
    </location>
</feature>
<feature type="domain" description="Reticulon" evidence="3">
    <location>
        <begin position="61"/>
        <end position="247"/>
    </location>
</feature>
<feature type="splice variant" id="VSP_037006" description="In isoform 2." evidence="4">
    <original>M</original>
    <variation>MKSTFICKLSNLRFRLCFRIM</variation>
    <location>
        <position position="1"/>
    </location>
</feature>
<dbReference type="EMBL" id="AC009400">
    <property type="protein sequence ID" value="AAF02816.1"/>
    <property type="molecule type" value="Genomic_DNA"/>
</dbReference>
<dbReference type="EMBL" id="CP002686">
    <property type="protein sequence ID" value="AEE74879.1"/>
    <property type="molecule type" value="Genomic_DNA"/>
</dbReference>
<dbReference type="EMBL" id="CP002686">
    <property type="protein sequence ID" value="AEE74880.1"/>
    <property type="molecule type" value="Genomic_DNA"/>
</dbReference>
<dbReference type="EMBL" id="CP002686">
    <property type="protein sequence ID" value="AEE74881.1"/>
    <property type="molecule type" value="Genomic_DNA"/>
</dbReference>
<dbReference type="EMBL" id="AY045830">
    <property type="protein sequence ID" value="AAK76504.1"/>
    <property type="molecule type" value="mRNA"/>
</dbReference>
<dbReference type="EMBL" id="AY091368">
    <property type="protein sequence ID" value="AAM14307.1"/>
    <property type="molecule type" value="mRNA"/>
</dbReference>
<dbReference type="EMBL" id="AY085435">
    <property type="protein sequence ID" value="AAM62662.1"/>
    <property type="molecule type" value="mRNA"/>
</dbReference>
<dbReference type="RefSeq" id="NP_566371.1">
    <molecule id="Q9SS37-1"/>
    <property type="nucleotide sequence ID" value="NM_111861.3"/>
</dbReference>
<dbReference type="RefSeq" id="NP_850551.1">
    <molecule id="Q9SS37-1"/>
    <property type="nucleotide sequence ID" value="NM_180220.4"/>
</dbReference>
<dbReference type="RefSeq" id="NP_850552.1">
    <molecule id="Q9SS37-2"/>
    <property type="nucleotide sequence ID" value="NM_180221.3"/>
</dbReference>
<dbReference type="BioGRID" id="5522">
    <property type="interactions" value="27"/>
</dbReference>
<dbReference type="FunCoup" id="Q9SS37">
    <property type="interactions" value="802"/>
</dbReference>
<dbReference type="IntAct" id="Q9SS37">
    <property type="interactions" value="26"/>
</dbReference>
<dbReference type="STRING" id="3702.Q9SS37"/>
<dbReference type="iPTMnet" id="Q9SS37"/>
<dbReference type="PaxDb" id="3702-AT3G10260.3"/>
<dbReference type="ProteomicsDB" id="226577">
    <molecule id="Q9SS37-1"/>
</dbReference>
<dbReference type="EnsemblPlants" id="AT3G10260.1">
    <molecule id="Q9SS37-1"/>
    <property type="protein sequence ID" value="AT3G10260.1"/>
    <property type="gene ID" value="AT3G10260"/>
</dbReference>
<dbReference type="EnsemblPlants" id="AT3G10260.2">
    <molecule id="Q9SS37-1"/>
    <property type="protein sequence ID" value="AT3G10260.2"/>
    <property type="gene ID" value="AT3G10260"/>
</dbReference>
<dbReference type="EnsemblPlants" id="AT3G10260.3">
    <molecule id="Q9SS37-2"/>
    <property type="protein sequence ID" value="AT3G10260.3"/>
    <property type="gene ID" value="AT3G10260"/>
</dbReference>
<dbReference type="GeneID" id="820188"/>
<dbReference type="Gramene" id="AT3G10260.1">
    <molecule id="Q9SS37-1"/>
    <property type="protein sequence ID" value="AT3G10260.1"/>
    <property type="gene ID" value="AT3G10260"/>
</dbReference>
<dbReference type="Gramene" id="AT3G10260.2">
    <molecule id="Q9SS37-1"/>
    <property type="protein sequence ID" value="AT3G10260.2"/>
    <property type="gene ID" value="AT3G10260"/>
</dbReference>
<dbReference type="Gramene" id="AT3G10260.3">
    <molecule id="Q9SS37-2"/>
    <property type="protein sequence ID" value="AT3G10260.3"/>
    <property type="gene ID" value="AT3G10260"/>
</dbReference>
<dbReference type="KEGG" id="ath:AT3G10260"/>
<dbReference type="Araport" id="AT3G10260"/>
<dbReference type="TAIR" id="AT3G10260">
    <property type="gene designation" value="RTNLB8"/>
</dbReference>
<dbReference type="eggNOG" id="KOG1792">
    <property type="taxonomic scope" value="Eukaryota"/>
</dbReference>
<dbReference type="HOGENOM" id="CLU_066344_1_2_1"/>
<dbReference type="InParanoid" id="Q9SS37"/>
<dbReference type="OMA" id="WCNFISV"/>
<dbReference type="OrthoDB" id="567788at2759"/>
<dbReference type="PhylomeDB" id="Q9SS37"/>
<dbReference type="PRO" id="PR:Q9SS37"/>
<dbReference type="Proteomes" id="UP000006548">
    <property type="component" value="Chromosome 3"/>
</dbReference>
<dbReference type="ExpressionAtlas" id="Q9SS37">
    <property type="expression patterns" value="baseline and differential"/>
</dbReference>
<dbReference type="GO" id="GO:0005829">
    <property type="term" value="C:cytosol"/>
    <property type="evidence" value="ECO:0007005"/>
    <property type="project" value="TAIR"/>
</dbReference>
<dbReference type="GO" id="GO:0005789">
    <property type="term" value="C:endoplasmic reticulum membrane"/>
    <property type="evidence" value="ECO:0007669"/>
    <property type="project" value="UniProtKB-SubCell"/>
</dbReference>
<dbReference type="GO" id="GO:0005739">
    <property type="term" value="C:mitochondrion"/>
    <property type="evidence" value="ECO:0007005"/>
    <property type="project" value="TAIR"/>
</dbReference>
<dbReference type="GO" id="GO:0009617">
    <property type="term" value="P:response to bacterium"/>
    <property type="evidence" value="ECO:0000315"/>
    <property type="project" value="TAIR"/>
</dbReference>
<dbReference type="InterPro" id="IPR003388">
    <property type="entry name" value="Reticulon"/>
</dbReference>
<dbReference type="InterPro" id="IPR045064">
    <property type="entry name" value="Reticulon-like"/>
</dbReference>
<dbReference type="PANTHER" id="PTHR10994">
    <property type="entry name" value="RETICULON"/>
    <property type="match status" value="1"/>
</dbReference>
<dbReference type="PANTHER" id="PTHR10994:SF62">
    <property type="entry name" value="RETICULON-LIKE PROTEIN B8"/>
    <property type="match status" value="1"/>
</dbReference>
<dbReference type="Pfam" id="PF02453">
    <property type="entry name" value="Reticulon"/>
    <property type="match status" value="1"/>
</dbReference>
<dbReference type="PROSITE" id="PS50845">
    <property type="entry name" value="RETICULON"/>
    <property type="match status" value="1"/>
</dbReference>
<organism>
    <name type="scientific">Arabidopsis thaliana</name>
    <name type="common">Mouse-ear cress</name>
    <dbReference type="NCBI Taxonomy" id="3702"/>
    <lineage>
        <taxon>Eukaryota</taxon>
        <taxon>Viridiplantae</taxon>
        <taxon>Streptophyta</taxon>
        <taxon>Embryophyta</taxon>
        <taxon>Tracheophyta</taxon>
        <taxon>Spermatophyta</taxon>
        <taxon>Magnoliopsida</taxon>
        <taxon>eudicotyledons</taxon>
        <taxon>Gunneridae</taxon>
        <taxon>Pentapetalae</taxon>
        <taxon>rosids</taxon>
        <taxon>malvids</taxon>
        <taxon>Brassicales</taxon>
        <taxon>Brassicaceae</taxon>
        <taxon>Camelineae</taxon>
        <taxon>Arabidopsis</taxon>
    </lineage>
</organism>
<gene>
    <name type="primary">RTNLB8</name>
    <name type="ordered locus">At3g10260</name>
    <name type="ORF">F14P13.14</name>
</gene>
<protein>
    <recommendedName>
        <fullName>Reticulon-like protein B8</fullName>
        <shortName>AtRTNLB8</shortName>
    </recommendedName>
</protein>
<keyword id="KW-0025">Alternative splicing</keyword>
<keyword id="KW-0256">Endoplasmic reticulum</keyword>
<keyword id="KW-0472">Membrane</keyword>
<keyword id="KW-1185">Reference proteome</keyword>
<keyword id="KW-0812">Transmembrane</keyword>
<keyword id="KW-1133">Transmembrane helix</keyword>
<accession>Q9SS37</accession>
<accession>Q3EB99</accession>
<comment type="subcellular location">
    <subcellularLocation>
        <location evidence="1">Endoplasmic reticulum membrane</location>
        <topology evidence="2">Multi-pass membrane protein</topology>
    </subcellularLocation>
</comment>
<comment type="alternative products">
    <event type="alternative splicing"/>
    <isoform>
        <id>Q9SS37-1</id>
        <name>1</name>
        <sequence type="displayed"/>
    </isoform>
    <isoform>
        <id>Q9SS37-2</id>
        <name>2</name>
        <sequence type="described" ref="VSP_037006"/>
    </isoform>
</comment>
<comment type="miscellaneous">
    <molecule>Isoform 2</molecule>
    <text evidence="4">May be due to intron retention.</text>
</comment>
<evidence type="ECO:0000250" key="1">
    <source>
        <dbReference type="UniProtKB" id="Q9SH59"/>
    </source>
</evidence>
<evidence type="ECO:0000255" key="2"/>
<evidence type="ECO:0000255" key="3">
    <source>
        <dbReference type="PROSITE-ProRule" id="PRU00170"/>
    </source>
</evidence>
<evidence type="ECO:0000305" key="4"/>
<reference key="1">
    <citation type="journal article" date="2000" name="Nature">
        <title>Sequence and analysis of chromosome 3 of the plant Arabidopsis thaliana.</title>
        <authorList>
            <person name="Salanoubat M."/>
            <person name="Lemcke K."/>
            <person name="Rieger M."/>
            <person name="Ansorge W."/>
            <person name="Unseld M."/>
            <person name="Fartmann B."/>
            <person name="Valle G."/>
            <person name="Bloecker H."/>
            <person name="Perez-Alonso M."/>
            <person name="Obermaier B."/>
            <person name="Delseny M."/>
            <person name="Boutry M."/>
            <person name="Grivell L.A."/>
            <person name="Mache R."/>
            <person name="Puigdomenech P."/>
            <person name="De Simone V."/>
            <person name="Choisne N."/>
            <person name="Artiguenave F."/>
            <person name="Robert C."/>
            <person name="Brottier P."/>
            <person name="Wincker P."/>
            <person name="Cattolico L."/>
            <person name="Weissenbach J."/>
            <person name="Saurin W."/>
            <person name="Quetier F."/>
            <person name="Schaefer M."/>
            <person name="Mueller-Auer S."/>
            <person name="Gabel C."/>
            <person name="Fuchs M."/>
            <person name="Benes V."/>
            <person name="Wurmbach E."/>
            <person name="Drzonek H."/>
            <person name="Erfle H."/>
            <person name="Jordan N."/>
            <person name="Bangert S."/>
            <person name="Wiedelmann R."/>
            <person name="Kranz H."/>
            <person name="Voss H."/>
            <person name="Holland R."/>
            <person name="Brandt P."/>
            <person name="Nyakatura G."/>
            <person name="Vezzi A."/>
            <person name="D'Angelo M."/>
            <person name="Pallavicini A."/>
            <person name="Toppo S."/>
            <person name="Simionati B."/>
            <person name="Conrad A."/>
            <person name="Hornischer K."/>
            <person name="Kauer G."/>
            <person name="Loehnert T.-H."/>
            <person name="Nordsiek G."/>
            <person name="Reichelt J."/>
            <person name="Scharfe M."/>
            <person name="Schoen O."/>
            <person name="Bargues M."/>
            <person name="Terol J."/>
            <person name="Climent J."/>
            <person name="Navarro P."/>
            <person name="Collado C."/>
            <person name="Perez-Perez A."/>
            <person name="Ottenwaelder B."/>
            <person name="Duchemin D."/>
            <person name="Cooke R."/>
            <person name="Laudie M."/>
            <person name="Berger-Llauro C."/>
            <person name="Purnelle B."/>
            <person name="Masuy D."/>
            <person name="de Haan M."/>
            <person name="Maarse A.C."/>
            <person name="Alcaraz J.-P."/>
            <person name="Cottet A."/>
            <person name="Casacuberta E."/>
            <person name="Monfort A."/>
            <person name="Argiriou A."/>
            <person name="Flores M."/>
            <person name="Liguori R."/>
            <person name="Vitale D."/>
            <person name="Mannhaupt G."/>
            <person name="Haase D."/>
            <person name="Schoof H."/>
            <person name="Rudd S."/>
            <person name="Zaccaria P."/>
            <person name="Mewes H.-W."/>
            <person name="Mayer K.F.X."/>
            <person name="Kaul S."/>
            <person name="Town C.D."/>
            <person name="Koo H.L."/>
            <person name="Tallon L.J."/>
            <person name="Jenkins J."/>
            <person name="Rooney T."/>
            <person name="Rizzo M."/>
            <person name="Walts A."/>
            <person name="Utterback T."/>
            <person name="Fujii C.Y."/>
            <person name="Shea T.P."/>
            <person name="Creasy T.H."/>
            <person name="Haas B."/>
            <person name="Maiti R."/>
            <person name="Wu D."/>
            <person name="Peterson J."/>
            <person name="Van Aken S."/>
            <person name="Pai G."/>
            <person name="Militscher J."/>
            <person name="Sellers P."/>
            <person name="Gill J.E."/>
            <person name="Feldblyum T.V."/>
            <person name="Preuss D."/>
            <person name="Lin X."/>
            <person name="Nierman W.C."/>
            <person name="Salzberg S.L."/>
            <person name="White O."/>
            <person name="Venter J.C."/>
            <person name="Fraser C.M."/>
            <person name="Kaneko T."/>
            <person name="Nakamura Y."/>
            <person name="Sato S."/>
            <person name="Kato T."/>
            <person name="Asamizu E."/>
            <person name="Sasamoto S."/>
            <person name="Kimura T."/>
            <person name="Idesawa K."/>
            <person name="Kawashima K."/>
            <person name="Kishida Y."/>
            <person name="Kiyokawa C."/>
            <person name="Kohara M."/>
            <person name="Matsumoto M."/>
            <person name="Matsuno A."/>
            <person name="Muraki A."/>
            <person name="Nakayama S."/>
            <person name="Nakazaki N."/>
            <person name="Shinpo S."/>
            <person name="Takeuchi C."/>
            <person name="Wada T."/>
            <person name="Watanabe A."/>
            <person name="Yamada M."/>
            <person name="Yasuda M."/>
            <person name="Tabata S."/>
        </authorList>
    </citation>
    <scope>NUCLEOTIDE SEQUENCE [LARGE SCALE GENOMIC DNA]</scope>
    <source>
        <strain>cv. Columbia</strain>
    </source>
</reference>
<reference key="2">
    <citation type="journal article" date="2017" name="Plant J.">
        <title>Araport11: a complete reannotation of the Arabidopsis thaliana reference genome.</title>
        <authorList>
            <person name="Cheng C.Y."/>
            <person name="Krishnakumar V."/>
            <person name="Chan A.P."/>
            <person name="Thibaud-Nissen F."/>
            <person name="Schobel S."/>
            <person name="Town C.D."/>
        </authorList>
    </citation>
    <scope>GENOME REANNOTATION</scope>
    <source>
        <strain>cv. Columbia</strain>
    </source>
</reference>
<reference key="3">
    <citation type="journal article" date="2003" name="Science">
        <title>Empirical analysis of transcriptional activity in the Arabidopsis genome.</title>
        <authorList>
            <person name="Yamada K."/>
            <person name="Lim J."/>
            <person name="Dale J.M."/>
            <person name="Chen H."/>
            <person name="Shinn P."/>
            <person name="Palm C.J."/>
            <person name="Southwick A.M."/>
            <person name="Wu H.C."/>
            <person name="Kim C.J."/>
            <person name="Nguyen M."/>
            <person name="Pham P.K."/>
            <person name="Cheuk R.F."/>
            <person name="Karlin-Newmann G."/>
            <person name="Liu S.X."/>
            <person name="Lam B."/>
            <person name="Sakano H."/>
            <person name="Wu T."/>
            <person name="Yu G."/>
            <person name="Miranda M."/>
            <person name="Quach H.L."/>
            <person name="Tripp M."/>
            <person name="Chang C.H."/>
            <person name="Lee J.M."/>
            <person name="Toriumi M.J."/>
            <person name="Chan M.M."/>
            <person name="Tang C.C."/>
            <person name="Onodera C.S."/>
            <person name="Deng J.M."/>
            <person name="Akiyama K."/>
            <person name="Ansari Y."/>
            <person name="Arakawa T."/>
            <person name="Banh J."/>
            <person name="Banno F."/>
            <person name="Bowser L."/>
            <person name="Brooks S.Y."/>
            <person name="Carninci P."/>
            <person name="Chao Q."/>
            <person name="Choy N."/>
            <person name="Enju A."/>
            <person name="Goldsmith A.D."/>
            <person name="Gurjal M."/>
            <person name="Hansen N.F."/>
            <person name="Hayashizaki Y."/>
            <person name="Johnson-Hopson C."/>
            <person name="Hsuan V.W."/>
            <person name="Iida K."/>
            <person name="Karnes M."/>
            <person name="Khan S."/>
            <person name="Koesema E."/>
            <person name="Ishida J."/>
            <person name="Jiang P.X."/>
            <person name="Jones T."/>
            <person name="Kawai J."/>
            <person name="Kamiya A."/>
            <person name="Meyers C."/>
            <person name="Nakajima M."/>
            <person name="Narusaka M."/>
            <person name="Seki M."/>
            <person name="Sakurai T."/>
            <person name="Satou M."/>
            <person name="Tamse R."/>
            <person name="Vaysberg M."/>
            <person name="Wallender E.K."/>
            <person name="Wong C."/>
            <person name="Yamamura Y."/>
            <person name="Yuan S."/>
            <person name="Shinozaki K."/>
            <person name="Davis R.W."/>
            <person name="Theologis A."/>
            <person name="Ecker J.R."/>
        </authorList>
    </citation>
    <scope>NUCLEOTIDE SEQUENCE [LARGE SCALE MRNA] (ISOFORM 1)</scope>
    <source>
        <strain>cv. Columbia</strain>
    </source>
</reference>
<reference key="4">
    <citation type="submission" date="2002-03" db="EMBL/GenBank/DDBJ databases">
        <title>Full-length cDNA from Arabidopsis thaliana.</title>
        <authorList>
            <person name="Brover V.V."/>
            <person name="Troukhan M.E."/>
            <person name="Alexandrov N.A."/>
            <person name="Lu Y.-P."/>
            <person name="Flavell R.B."/>
            <person name="Feldmann K.A."/>
        </authorList>
    </citation>
    <scope>NUCLEOTIDE SEQUENCE [LARGE SCALE MRNA] (ISOFORM 1)</scope>
</reference>
<reference key="5">
    <citation type="journal article" date="2007" name="FEBS Lett.">
        <title>Reticulon-like proteins in Arabidopsis thaliana: structural organization and ER localization.</title>
        <authorList>
            <person name="Nziengui H."/>
            <person name="Bouhidel K."/>
            <person name="Pillon D."/>
            <person name="Der C."/>
            <person name="Marty F."/>
            <person name="Schoefs B."/>
        </authorList>
    </citation>
    <scope>GENE FAMILY</scope>
    <scope>NOMENCLATURE</scope>
</reference>